<gene>
    <name type="primary">Cipc</name>
    <name type="synonym">Kiaa1737</name>
</gene>
<reference key="1">
    <citation type="journal article" date="2007" name="Nat. Cell Biol.">
        <title>CIPC is a mammalian circadian clock protein without invertebrate homologues.</title>
        <authorList>
            <person name="Zhao W.N."/>
            <person name="Malinin N."/>
            <person name="Yang F.C."/>
            <person name="Staknis D."/>
            <person name="Gekakis N."/>
            <person name="Maier B."/>
            <person name="Reischl S."/>
            <person name="Kramer A."/>
            <person name="Weitz C.J."/>
        </authorList>
    </citation>
    <scope>NUCLEOTIDE SEQUENCE [MRNA] (ISOFORM 1)</scope>
    <scope>FUNCTION</scope>
    <scope>SUBCELLULAR LOCATION</scope>
    <scope>TISSUE SPECIFICITY</scope>
    <scope>INTERACTION WITH CLOCK</scope>
</reference>
<reference key="2">
    <citation type="journal article" date="2003" name="DNA Res.">
        <title>Prediction of the coding sequences of mouse homologues of KIAA gene: II. The complete nucleotide sequences of 400 mouse KIAA-homologous cDNAs identified by screening of terminal sequences of cDNA clones randomly sampled from size-fractionated libraries.</title>
        <authorList>
            <person name="Okazaki N."/>
            <person name="Kikuno R."/>
            <person name="Ohara R."/>
            <person name="Inamoto S."/>
            <person name="Aizawa H."/>
            <person name="Yuasa S."/>
            <person name="Nakajima D."/>
            <person name="Nagase T."/>
            <person name="Ohara O."/>
            <person name="Koga H."/>
        </authorList>
    </citation>
    <scope>NUCLEOTIDE SEQUENCE [LARGE SCALE MRNA] (ISOFORM 1)</scope>
    <source>
        <tissue>Brain</tissue>
    </source>
</reference>
<reference key="3">
    <citation type="journal article" date="2005" name="Science">
        <title>The transcriptional landscape of the mammalian genome.</title>
        <authorList>
            <person name="Carninci P."/>
            <person name="Kasukawa T."/>
            <person name="Katayama S."/>
            <person name="Gough J."/>
            <person name="Frith M.C."/>
            <person name="Maeda N."/>
            <person name="Oyama R."/>
            <person name="Ravasi T."/>
            <person name="Lenhard B."/>
            <person name="Wells C."/>
            <person name="Kodzius R."/>
            <person name="Shimokawa K."/>
            <person name="Bajic V.B."/>
            <person name="Brenner S.E."/>
            <person name="Batalov S."/>
            <person name="Forrest A.R."/>
            <person name="Zavolan M."/>
            <person name="Davis M.J."/>
            <person name="Wilming L.G."/>
            <person name="Aidinis V."/>
            <person name="Allen J.E."/>
            <person name="Ambesi-Impiombato A."/>
            <person name="Apweiler R."/>
            <person name="Aturaliya R.N."/>
            <person name="Bailey T.L."/>
            <person name="Bansal M."/>
            <person name="Baxter L."/>
            <person name="Beisel K.W."/>
            <person name="Bersano T."/>
            <person name="Bono H."/>
            <person name="Chalk A.M."/>
            <person name="Chiu K.P."/>
            <person name="Choudhary V."/>
            <person name="Christoffels A."/>
            <person name="Clutterbuck D.R."/>
            <person name="Crowe M.L."/>
            <person name="Dalla E."/>
            <person name="Dalrymple B.P."/>
            <person name="de Bono B."/>
            <person name="Della Gatta G."/>
            <person name="di Bernardo D."/>
            <person name="Down T."/>
            <person name="Engstrom P."/>
            <person name="Fagiolini M."/>
            <person name="Faulkner G."/>
            <person name="Fletcher C.F."/>
            <person name="Fukushima T."/>
            <person name="Furuno M."/>
            <person name="Futaki S."/>
            <person name="Gariboldi M."/>
            <person name="Georgii-Hemming P."/>
            <person name="Gingeras T.R."/>
            <person name="Gojobori T."/>
            <person name="Green R.E."/>
            <person name="Gustincich S."/>
            <person name="Harbers M."/>
            <person name="Hayashi Y."/>
            <person name="Hensch T.K."/>
            <person name="Hirokawa N."/>
            <person name="Hill D."/>
            <person name="Huminiecki L."/>
            <person name="Iacono M."/>
            <person name="Ikeo K."/>
            <person name="Iwama A."/>
            <person name="Ishikawa T."/>
            <person name="Jakt M."/>
            <person name="Kanapin A."/>
            <person name="Katoh M."/>
            <person name="Kawasawa Y."/>
            <person name="Kelso J."/>
            <person name="Kitamura H."/>
            <person name="Kitano H."/>
            <person name="Kollias G."/>
            <person name="Krishnan S.P."/>
            <person name="Kruger A."/>
            <person name="Kummerfeld S.K."/>
            <person name="Kurochkin I.V."/>
            <person name="Lareau L.F."/>
            <person name="Lazarevic D."/>
            <person name="Lipovich L."/>
            <person name="Liu J."/>
            <person name="Liuni S."/>
            <person name="McWilliam S."/>
            <person name="Madan Babu M."/>
            <person name="Madera M."/>
            <person name="Marchionni L."/>
            <person name="Matsuda H."/>
            <person name="Matsuzawa S."/>
            <person name="Miki H."/>
            <person name="Mignone F."/>
            <person name="Miyake S."/>
            <person name="Morris K."/>
            <person name="Mottagui-Tabar S."/>
            <person name="Mulder N."/>
            <person name="Nakano N."/>
            <person name="Nakauchi H."/>
            <person name="Ng P."/>
            <person name="Nilsson R."/>
            <person name="Nishiguchi S."/>
            <person name="Nishikawa S."/>
            <person name="Nori F."/>
            <person name="Ohara O."/>
            <person name="Okazaki Y."/>
            <person name="Orlando V."/>
            <person name="Pang K.C."/>
            <person name="Pavan W.J."/>
            <person name="Pavesi G."/>
            <person name="Pesole G."/>
            <person name="Petrovsky N."/>
            <person name="Piazza S."/>
            <person name="Reed J."/>
            <person name="Reid J.F."/>
            <person name="Ring B.Z."/>
            <person name="Ringwald M."/>
            <person name="Rost B."/>
            <person name="Ruan Y."/>
            <person name="Salzberg S.L."/>
            <person name="Sandelin A."/>
            <person name="Schneider C."/>
            <person name="Schoenbach C."/>
            <person name="Sekiguchi K."/>
            <person name="Semple C.A."/>
            <person name="Seno S."/>
            <person name="Sessa L."/>
            <person name="Sheng Y."/>
            <person name="Shibata Y."/>
            <person name="Shimada H."/>
            <person name="Shimada K."/>
            <person name="Silva D."/>
            <person name="Sinclair B."/>
            <person name="Sperling S."/>
            <person name="Stupka E."/>
            <person name="Sugiura K."/>
            <person name="Sultana R."/>
            <person name="Takenaka Y."/>
            <person name="Taki K."/>
            <person name="Tammoja K."/>
            <person name="Tan S.L."/>
            <person name="Tang S."/>
            <person name="Taylor M.S."/>
            <person name="Tegner J."/>
            <person name="Teichmann S.A."/>
            <person name="Ueda H.R."/>
            <person name="van Nimwegen E."/>
            <person name="Verardo R."/>
            <person name="Wei C.L."/>
            <person name="Yagi K."/>
            <person name="Yamanishi H."/>
            <person name="Zabarovsky E."/>
            <person name="Zhu S."/>
            <person name="Zimmer A."/>
            <person name="Hide W."/>
            <person name="Bult C."/>
            <person name="Grimmond S.M."/>
            <person name="Teasdale R.D."/>
            <person name="Liu E.T."/>
            <person name="Brusic V."/>
            <person name="Quackenbush J."/>
            <person name="Wahlestedt C."/>
            <person name="Mattick J.S."/>
            <person name="Hume D.A."/>
            <person name="Kai C."/>
            <person name="Sasaki D."/>
            <person name="Tomaru Y."/>
            <person name="Fukuda S."/>
            <person name="Kanamori-Katayama M."/>
            <person name="Suzuki M."/>
            <person name="Aoki J."/>
            <person name="Arakawa T."/>
            <person name="Iida J."/>
            <person name="Imamura K."/>
            <person name="Itoh M."/>
            <person name="Kato T."/>
            <person name="Kawaji H."/>
            <person name="Kawagashira N."/>
            <person name="Kawashima T."/>
            <person name="Kojima M."/>
            <person name="Kondo S."/>
            <person name="Konno H."/>
            <person name="Nakano K."/>
            <person name="Ninomiya N."/>
            <person name="Nishio T."/>
            <person name="Okada M."/>
            <person name="Plessy C."/>
            <person name="Shibata K."/>
            <person name="Shiraki T."/>
            <person name="Suzuki S."/>
            <person name="Tagami M."/>
            <person name="Waki K."/>
            <person name="Watahiki A."/>
            <person name="Okamura-Oho Y."/>
            <person name="Suzuki H."/>
            <person name="Kawai J."/>
            <person name="Hayashizaki Y."/>
        </authorList>
    </citation>
    <scope>NUCLEOTIDE SEQUENCE [LARGE SCALE MRNA] (ISOFORMS 1 AND 2)</scope>
    <source>
        <strain>C57BL/6J</strain>
        <strain>NOD</strain>
        <tissue>Skin</tissue>
    </source>
</reference>
<reference key="4">
    <citation type="journal article" date="2004" name="Genome Res.">
        <title>The status, quality, and expansion of the NIH full-length cDNA project: the Mammalian Gene Collection (MGC).</title>
        <authorList>
            <consortium name="The MGC Project Team"/>
        </authorList>
    </citation>
    <scope>NUCLEOTIDE SEQUENCE [LARGE SCALE MRNA] (ISOFORM 1)</scope>
    <source>
        <strain>FVB/N</strain>
        <tissue>Salivary gland</tissue>
    </source>
</reference>
<reference key="5">
    <citation type="journal article" date="2009" name="Mol. Cell. Biol.">
        <title>Roles of CLOCK phosphorylation in suppression of E-box-dependent transcription.</title>
        <authorList>
            <person name="Yoshitane H."/>
            <person name="Takao T."/>
            <person name="Satomi Y."/>
            <person name="Du N.H."/>
            <person name="Okano T."/>
            <person name="Fukada Y."/>
        </authorList>
    </citation>
    <scope>FUNCTION</scope>
</reference>
<reference key="6">
    <citation type="journal article" date="2015" name="Sci. China Life Sci.">
        <title>Inactivation of Cipc alters the expression of Per1 but not circadian rhythms in mice.</title>
        <authorList>
            <person name="Qu Z."/>
            <person name="Wang X."/>
            <person name="Liu D."/>
            <person name="Gao X."/>
            <person name="Xu Y."/>
        </authorList>
    </citation>
    <scope>FUNCTION</scope>
    <scope>DISRUPTION PHENOTYPE</scope>
</reference>
<comment type="function">
    <text evidence="4 5 6">Transcriptional repressor which may act as a negative-feedback regulator of CLOCK-BMAL1 transcriptional activity in the circadian-clock mechanism. May stimulate BMAL1-dependent phosphorylation of CLOCK (PubMed:17310242, PubMed:19414601). However, the physiological relevance of these observations is unsure, since experiments in knockout mice showed that CIPC is not critially required for basic circadian clock (PubMed:25862660).</text>
</comment>
<comment type="subunit">
    <text evidence="1 4">Interacts with CLOCK. Forms a ternary complex with the CLOCK-BMAL1 heterodimer. Interacts with CAD and HSPA5 (By similarity).</text>
</comment>
<comment type="subcellular location">
    <subcellularLocation>
        <location evidence="4">Nucleus</location>
    </subcellularLocation>
    <subcellularLocation>
        <location evidence="1">Cytoplasm</location>
        <location evidence="1">Cytosol</location>
    </subcellularLocation>
    <text evidence="1 4">Predominantly localizes to the nucleus, where it co-localizes with CLOCK. At the G1/S boundary, partially translocated to the cytosol.</text>
</comment>
<comment type="alternative products">
    <event type="alternative splicing"/>
    <isoform>
        <id>Q8R0W1-1</id>
        <name>1</name>
        <sequence type="displayed"/>
    </isoform>
    <isoform>
        <id>Q8R0W1-2</id>
        <name>2</name>
        <sequence type="described" ref="VSP_055396"/>
    </isoform>
</comment>
<comment type="tissue specificity">
    <text evidence="4">Expressed in the heart, kidney and liver and shows a circadian oscillation in these tissues with a peak at circadian time 14 hours (at protein level). Expressed in the brain, including the suprachiasmatic nucleus (SCN) of the brain, and in multiple peripheral tissues such as heart, liver and kidney. Exhibits a circadian oscillation in the peripheral tissues with a peak at circadian time 14 hours.</text>
</comment>
<comment type="disruption phenotype">
    <text evidence="6">No visible phenotype. Knockout mice display normal locomotor activity rhythms and normal behavioral responses to light. Animals show reduction liver PER1 peak levels, but no change in the expression of other core clock genes.</text>
</comment>
<comment type="caution">
    <text evidence="8">It is uncertain whether Met-1 or Met-36 is the initiator.</text>
</comment>
<comment type="sequence caution" evidence="8">
    <conflict type="erroneous initiation">
        <sequence resource="EMBL-CDS" id="BAC65828"/>
    </conflict>
    <text>Extended N-terminus.</text>
</comment>
<keyword id="KW-0002">3D-structure</keyword>
<keyword id="KW-0025">Alternative splicing</keyword>
<keyword id="KW-0090">Biological rhythms</keyword>
<keyword id="KW-0175">Coiled coil</keyword>
<keyword id="KW-0963">Cytoplasm</keyword>
<keyword id="KW-0539">Nucleus</keyword>
<keyword id="KW-0597">Phosphoprotein</keyword>
<keyword id="KW-1185">Reference proteome</keyword>
<keyword id="KW-0678">Repressor</keyword>
<keyword id="KW-0804">Transcription</keyword>
<keyword id="KW-0805">Transcription regulation</keyword>
<feature type="chain" id="PRO_0000256134" description="CLOCK-interacting pacemaker">
    <location>
        <begin position="1"/>
        <end position="432"/>
    </location>
</feature>
<feature type="region of interest" description="Disordered" evidence="3">
    <location>
        <begin position="71"/>
        <end position="98"/>
    </location>
</feature>
<feature type="region of interest" description="Disordered" evidence="3">
    <location>
        <begin position="194"/>
        <end position="315"/>
    </location>
</feature>
<feature type="region of interest" description="Disordered" evidence="3">
    <location>
        <begin position="408"/>
        <end position="432"/>
    </location>
</feature>
<feature type="coiled-coil region" evidence="2">
    <location>
        <begin position="364"/>
        <end position="395"/>
    </location>
</feature>
<feature type="compositionally biased region" description="Polar residues" evidence="3">
    <location>
        <begin position="272"/>
        <end position="283"/>
    </location>
</feature>
<feature type="compositionally biased region" description="Low complexity" evidence="3">
    <location>
        <begin position="411"/>
        <end position="424"/>
    </location>
</feature>
<feature type="modified residue" description="Phosphoserine" evidence="1">
    <location>
        <position position="246"/>
    </location>
</feature>
<feature type="splice variant" id="VSP_055396" description="In isoform 2." evidence="7">
    <original>MRLLTRRAGHGAATLAL</original>
    <variation>MLQVMTSYVIVVFH</variation>
    <location>
        <begin position="1"/>
        <end position="17"/>
    </location>
</feature>
<feature type="sequence conflict" description="In Ref. 4; AAH26384." evidence="8" ref="4">
    <original>A</original>
    <variation>T</variation>
    <location>
        <position position="8"/>
    </location>
</feature>
<feature type="sequence conflict" description="In Ref. 3; BAE32612." evidence="8" ref="3">
    <original>I</original>
    <variation>L</variation>
    <location>
        <position position="33"/>
    </location>
</feature>
<feature type="sequence conflict" description="In Ref. 3; BAE32612." evidence="8" ref="3">
    <original>A</original>
    <variation>S</variation>
    <location>
        <position position="63"/>
    </location>
</feature>
<feature type="sequence conflict" description="In Ref. 3; BAE32612." evidence="8" ref="3">
    <original>T</original>
    <variation>I</variation>
    <location>
        <position position="260"/>
    </location>
</feature>
<feature type="sequence conflict" description="In Ref. 3; BAC36322." evidence="8" ref="3">
    <original>T</original>
    <variation>S</variation>
    <location>
        <position position="275"/>
    </location>
</feature>
<feature type="sequence conflict" description="In Ref. 3; BAE35935." evidence="8" ref="3">
    <original>S</original>
    <variation>R</variation>
    <location>
        <position position="282"/>
    </location>
</feature>
<feature type="helix" evidence="9">
    <location>
        <begin position="353"/>
        <end position="359"/>
    </location>
</feature>
<feature type="helix" evidence="9">
    <location>
        <begin position="362"/>
        <end position="396"/>
    </location>
</feature>
<feature type="strand" evidence="10">
    <location>
        <begin position="400"/>
        <end position="402"/>
    </location>
</feature>
<feature type="helix" evidence="9">
    <location>
        <begin position="407"/>
        <end position="412"/>
    </location>
</feature>
<proteinExistence type="evidence at protein level"/>
<dbReference type="EMBL" id="AK122546">
    <property type="protein sequence ID" value="BAC65828.1"/>
    <property type="status" value="ALT_INIT"/>
    <property type="molecule type" value="mRNA"/>
</dbReference>
<dbReference type="EMBL" id="AK076398">
    <property type="protein sequence ID" value="BAC36322.1"/>
    <property type="molecule type" value="mRNA"/>
</dbReference>
<dbReference type="EMBL" id="AK148415">
    <property type="protein sequence ID" value="BAE28540.1"/>
    <property type="molecule type" value="mRNA"/>
</dbReference>
<dbReference type="EMBL" id="AK154476">
    <property type="protein sequence ID" value="BAE32612.1"/>
    <property type="molecule type" value="mRNA"/>
</dbReference>
<dbReference type="EMBL" id="AK160643">
    <property type="protein sequence ID" value="BAE35935.1"/>
    <property type="molecule type" value="mRNA"/>
</dbReference>
<dbReference type="EMBL" id="BC026384">
    <property type="protein sequence ID" value="AAH26384.1"/>
    <property type="molecule type" value="mRNA"/>
</dbReference>
<dbReference type="RefSeq" id="NP_001276359.1">
    <property type="nucleotide sequence ID" value="NM_001289430.1"/>
</dbReference>
<dbReference type="RefSeq" id="NP_776096.2">
    <property type="nucleotide sequence ID" value="NM_173735.3"/>
</dbReference>
<dbReference type="RefSeq" id="XP_011242380.1">
    <property type="nucleotide sequence ID" value="XM_011244078.2"/>
</dbReference>
<dbReference type="PDB" id="5VJI">
    <property type="method" value="X-ray"/>
    <property type="resolution" value="1.86 A"/>
    <property type="chains" value="C/F=352-414"/>
</dbReference>
<dbReference type="PDB" id="5VJX">
    <property type="method" value="X-ray"/>
    <property type="resolution" value="2.69 A"/>
    <property type="chains" value="A/D/G/J/M/R/U/X/a/d=352-414"/>
</dbReference>
<dbReference type="PDBsum" id="5VJI"/>
<dbReference type="PDBsum" id="5VJX"/>
<dbReference type="SMR" id="Q8R0W1"/>
<dbReference type="FunCoup" id="Q8R0W1">
    <property type="interactions" value="2868"/>
</dbReference>
<dbReference type="IntAct" id="Q8R0W1">
    <property type="interactions" value="4"/>
</dbReference>
<dbReference type="STRING" id="10090.ENSMUSP00000038630"/>
<dbReference type="GlyGen" id="Q8R0W1">
    <property type="glycosylation" value="1 site"/>
</dbReference>
<dbReference type="iPTMnet" id="Q8R0W1"/>
<dbReference type="PhosphoSitePlus" id="Q8R0W1"/>
<dbReference type="PaxDb" id="10090-ENSMUSP00000141049"/>
<dbReference type="ProteomicsDB" id="283921">
    <molecule id="Q8R0W1-1"/>
</dbReference>
<dbReference type="ProteomicsDB" id="283922">
    <molecule id="Q8R0W1-2"/>
</dbReference>
<dbReference type="Antibodypedia" id="99">
    <property type="antibodies" value="32 antibodies from 9 providers"/>
</dbReference>
<dbReference type="Ensembl" id="ENSMUST00000187814.7">
    <molecule id="Q8R0W1-1"/>
    <property type="protein sequence ID" value="ENSMUSP00000141049.2"/>
    <property type="gene ID" value="ENSMUSG00000034157.13"/>
</dbReference>
<dbReference type="Ensembl" id="ENSMUST00000191463.2">
    <molecule id="Q8R0W1-2"/>
    <property type="protein sequence ID" value="ENSMUSP00000140683.2"/>
    <property type="gene ID" value="ENSMUSG00000034157.13"/>
</dbReference>
<dbReference type="GeneID" id="217732"/>
<dbReference type="KEGG" id="mmu:217732"/>
<dbReference type="UCSC" id="uc007oib.4">
    <molecule id="Q8R0W1-1"/>
    <property type="organism name" value="mouse"/>
</dbReference>
<dbReference type="UCSC" id="uc007oid.4">
    <molecule id="Q8R0W1-2"/>
    <property type="organism name" value="mouse"/>
</dbReference>
<dbReference type="AGR" id="MGI:1919185"/>
<dbReference type="CTD" id="85457"/>
<dbReference type="MGI" id="MGI:1919185">
    <property type="gene designation" value="Cipc"/>
</dbReference>
<dbReference type="VEuPathDB" id="HostDB:ENSMUSG00000034157"/>
<dbReference type="eggNOG" id="ENOG502RJ2N">
    <property type="taxonomic scope" value="Eukaryota"/>
</dbReference>
<dbReference type="GeneTree" id="ENSGT00510000048522"/>
<dbReference type="InParanoid" id="Q8R0W1"/>
<dbReference type="OrthoDB" id="6374619at2759"/>
<dbReference type="PhylomeDB" id="Q8R0W1"/>
<dbReference type="BioGRID-ORCS" id="217732">
    <property type="hits" value="3 hits in 77 CRISPR screens"/>
</dbReference>
<dbReference type="ChiTaRS" id="Cipc">
    <property type="organism name" value="mouse"/>
</dbReference>
<dbReference type="PRO" id="PR:Q8R0W1"/>
<dbReference type="Proteomes" id="UP000000589">
    <property type="component" value="Chromosome 12"/>
</dbReference>
<dbReference type="RNAct" id="Q8R0W1">
    <property type="molecule type" value="protein"/>
</dbReference>
<dbReference type="Bgee" id="ENSMUSG00000034157">
    <property type="expression patterns" value="Expressed in right colon and 252 other cell types or tissues"/>
</dbReference>
<dbReference type="ExpressionAtlas" id="Q8R0W1">
    <property type="expression patterns" value="baseline and differential"/>
</dbReference>
<dbReference type="GO" id="GO:0005829">
    <property type="term" value="C:cytosol"/>
    <property type="evidence" value="ECO:0007669"/>
    <property type="project" value="UniProtKB-SubCell"/>
</dbReference>
<dbReference type="GO" id="GO:0005730">
    <property type="term" value="C:nucleolus"/>
    <property type="evidence" value="ECO:0007669"/>
    <property type="project" value="Ensembl"/>
</dbReference>
<dbReference type="GO" id="GO:0005654">
    <property type="term" value="C:nucleoplasm"/>
    <property type="evidence" value="ECO:0007669"/>
    <property type="project" value="Ensembl"/>
</dbReference>
<dbReference type="GO" id="GO:0005634">
    <property type="term" value="C:nucleus"/>
    <property type="evidence" value="ECO:0000314"/>
    <property type="project" value="UniProtKB"/>
</dbReference>
<dbReference type="GO" id="GO:0042754">
    <property type="term" value="P:negative regulation of circadian rhythm"/>
    <property type="evidence" value="ECO:0000315"/>
    <property type="project" value="UniProtKB"/>
</dbReference>
<dbReference type="GO" id="GO:0045892">
    <property type="term" value="P:negative regulation of DNA-templated transcription"/>
    <property type="evidence" value="ECO:0000314"/>
    <property type="project" value="UniProtKB"/>
</dbReference>
<dbReference type="GO" id="GO:0048511">
    <property type="term" value="P:rhythmic process"/>
    <property type="evidence" value="ECO:0007669"/>
    <property type="project" value="UniProtKB-KW"/>
</dbReference>
<dbReference type="InterPro" id="IPR031602">
    <property type="entry name" value="CIPC"/>
</dbReference>
<dbReference type="PANTHER" id="PTHR34648">
    <property type="entry name" value="CLOCK-INTERACTING PACEMAKER"/>
    <property type="match status" value="1"/>
</dbReference>
<dbReference type="PANTHER" id="PTHR34648:SF1">
    <property type="entry name" value="CLOCK-INTERACTING PACEMAKER"/>
    <property type="match status" value="1"/>
</dbReference>
<dbReference type="Pfam" id="PF15800">
    <property type="entry name" value="CiPC"/>
    <property type="match status" value="1"/>
</dbReference>
<sequence>MRLLTRRAGHGAATLALRVIHMQRVPVLRLPAILDMERKIPSRESPRRLSAKPGRGTEMKKLARPLGVVAADSDKDSGFSDGSSECLSSAEQMESEDMLSALGCKREDKRRQPSKAADTALPTLPPMVVMKSVLVKQGSSSSQLQSWTVQPSFEVISAQPQLFVLHPPVPSPVSSCQTGEKKSESRNYLPILNSYTKIAPHPGKRGLNSEDRGTSGVSKKLCTERPGPSLSSSEPAKTGRVLSSPSTPAPPSSKLTEDSTLQGVPSLGAGGSPQTLQPVSSSHVAKAPSLTLASPASPVCASDSTLHGLESSSPLSPLSASYTSPLWAAEHLCRSPDIFSEQRQNKHRRFQNTLVVLHKSGLLEITLKTKELIRQNQATQAELDQLKEQTQMFIEATKSRAPQAWAKLQASLTSGSSHSGSDLDTLSDHPDV</sequence>
<accession>Q8R0W1</accession>
<accession>Q3TUN6</accession>
<accession>Q3U423</accession>
<accession>Q3UFM0</accession>
<accession>Q80T99</accession>
<accession>Q8C680</accession>
<organism>
    <name type="scientific">Mus musculus</name>
    <name type="common">Mouse</name>
    <dbReference type="NCBI Taxonomy" id="10090"/>
    <lineage>
        <taxon>Eukaryota</taxon>
        <taxon>Metazoa</taxon>
        <taxon>Chordata</taxon>
        <taxon>Craniata</taxon>
        <taxon>Vertebrata</taxon>
        <taxon>Euteleostomi</taxon>
        <taxon>Mammalia</taxon>
        <taxon>Eutheria</taxon>
        <taxon>Euarchontoglires</taxon>
        <taxon>Glires</taxon>
        <taxon>Rodentia</taxon>
        <taxon>Myomorpha</taxon>
        <taxon>Muroidea</taxon>
        <taxon>Muridae</taxon>
        <taxon>Murinae</taxon>
        <taxon>Mus</taxon>
        <taxon>Mus</taxon>
    </lineage>
</organism>
<protein>
    <recommendedName>
        <fullName>CLOCK-interacting pacemaker</fullName>
    </recommendedName>
    <alternativeName>
        <fullName>CLOCK-interacting circadian protein</fullName>
    </alternativeName>
</protein>
<evidence type="ECO:0000250" key="1">
    <source>
        <dbReference type="UniProtKB" id="Q9C0C6"/>
    </source>
</evidence>
<evidence type="ECO:0000255" key="2"/>
<evidence type="ECO:0000256" key="3">
    <source>
        <dbReference type="SAM" id="MobiDB-lite"/>
    </source>
</evidence>
<evidence type="ECO:0000269" key="4">
    <source>
    </source>
</evidence>
<evidence type="ECO:0000269" key="5">
    <source>
    </source>
</evidence>
<evidence type="ECO:0000269" key="6">
    <source>
    </source>
</evidence>
<evidence type="ECO:0000303" key="7">
    <source>
    </source>
</evidence>
<evidence type="ECO:0000305" key="8"/>
<evidence type="ECO:0007829" key="9">
    <source>
        <dbReference type="PDB" id="5VJI"/>
    </source>
</evidence>
<evidence type="ECO:0007829" key="10">
    <source>
        <dbReference type="PDB" id="5VJX"/>
    </source>
</evidence>
<name>CIPC_MOUSE</name>